<accession>Q8KTA8</accession>
<accession>Q4UKC7</accession>
<reference key="1">
    <citation type="journal article" date="2002" name="Mol. Biol. Evol.">
        <title>Proliferation and deterioration of Rickettsia palindromic elements.</title>
        <authorList>
            <person name="Amiri H."/>
            <person name="Alsmark C.M."/>
            <person name="Andersson S.G.E."/>
        </authorList>
    </citation>
    <scope>NUCLEOTIDE SEQUENCE [GENOMIC DNA]</scope>
</reference>
<reference key="2">
    <citation type="journal article" date="2005" name="PLoS Biol.">
        <title>The genome sequence of Rickettsia felis identifies the first putative conjugative plasmid in an obligate intracellular parasite.</title>
        <authorList>
            <person name="Ogata H."/>
            <person name="Renesto P."/>
            <person name="Audic S."/>
            <person name="Robert C."/>
            <person name="Blanc G."/>
            <person name="Fournier P.-E."/>
            <person name="Parinello H."/>
            <person name="Claverie J.-M."/>
            <person name="Raoult D."/>
        </authorList>
    </citation>
    <scope>NUCLEOTIDE SEQUENCE [LARGE SCALE GENOMIC DNA]</scope>
    <source>
        <strain>ATCC VR-1525 / URRWXCal2</strain>
    </source>
</reference>
<name>EFG_RICFE</name>
<protein>
    <recommendedName>
        <fullName evidence="1">Elongation factor G</fullName>
        <shortName evidence="1">EF-G</shortName>
    </recommendedName>
</protein>
<gene>
    <name evidence="1" type="primary">fusA</name>
    <name type="ordered locus">RF_1153</name>
</gene>
<sequence>MSKINKLEHIRNIGICAHIDAGKTTTTERILYYTGKSHKIGEVHEGGATMDWMEQEQERGITITSAATTCRWQDKIINIIDTPGHVDFTIEVERSLRVLDGAVAVFDGVAGVEPQSETVWRQADKYNVPRMCFVNKMDRMGADFYRCVEMIKDRLGAKPLVIQLPVGIEESFKGIIDLVKMKAVIWKDESLGAEYFEEDIPADMKDKAEEYRAKLLDMVVELDDAIMEKYLSGEEVTEEEIKRLIRRGTISAAFYPVLCGSAFKNKGVQPLLDAVVDFLPSPIDIGIVKGMEVSTGEEKDFPISITEPFSALAFKIMNDPFVGSLTFIRIYSGKITSGSTVINTVKNKREKIGRMLLMHANNREDVKEASAGDIVALAGLKDTTTGDTLSDMDKQVILERMEFPEPVIELAVEPKSTADQEKMGLALSRLAAEDPSFRVSTDHETGQTVIKGMGELHLEIIIDRMRREFKVEANIGAPQVAYRETITKACEIDYTHKKQSGGAGQFARVKIIFEPLKEVKDLKDEDKNKTFVFESKIVGGAVPKEYIPGVEKGLNNIRETGVIAGYPMIDFKATLVDGAFHDVDSSVLAFEIAAKAAFREGMPKGNPKLLEPIMKVEVITPDEYMGDIIGDLNSRRGQIQSMDPRGNAQVVTANVPLAEMFGYVNTLRSLSQGRAQFSMIFSHYDQVPSQVADIIKAKK</sequence>
<feature type="chain" id="PRO_0000091197" description="Elongation factor G">
    <location>
        <begin position="1"/>
        <end position="699"/>
    </location>
</feature>
<feature type="domain" description="tr-type G">
    <location>
        <begin position="8"/>
        <end position="283"/>
    </location>
</feature>
<feature type="binding site" evidence="1">
    <location>
        <begin position="17"/>
        <end position="24"/>
    </location>
    <ligand>
        <name>GTP</name>
        <dbReference type="ChEBI" id="CHEBI:37565"/>
    </ligand>
</feature>
<feature type="binding site" evidence="1">
    <location>
        <begin position="81"/>
        <end position="85"/>
    </location>
    <ligand>
        <name>GTP</name>
        <dbReference type="ChEBI" id="CHEBI:37565"/>
    </ligand>
</feature>
<feature type="binding site" evidence="1">
    <location>
        <begin position="135"/>
        <end position="138"/>
    </location>
    <ligand>
        <name>GTP</name>
        <dbReference type="ChEBI" id="CHEBI:37565"/>
    </ligand>
</feature>
<feature type="sequence conflict" description="In Ref. 1; AAM90929." evidence="2" ref="1">
    <original>M</original>
    <variation>I</variation>
    <location>
        <position position="392"/>
    </location>
</feature>
<keyword id="KW-0963">Cytoplasm</keyword>
<keyword id="KW-0251">Elongation factor</keyword>
<keyword id="KW-0342">GTP-binding</keyword>
<keyword id="KW-0547">Nucleotide-binding</keyword>
<keyword id="KW-0648">Protein biosynthesis</keyword>
<evidence type="ECO:0000255" key="1">
    <source>
        <dbReference type="HAMAP-Rule" id="MF_00054"/>
    </source>
</evidence>
<evidence type="ECO:0000305" key="2"/>
<organism>
    <name type="scientific">Rickettsia felis (strain ATCC VR-1525 / URRWXCal2)</name>
    <name type="common">Rickettsia azadi</name>
    <dbReference type="NCBI Taxonomy" id="315456"/>
    <lineage>
        <taxon>Bacteria</taxon>
        <taxon>Pseudomonadati</taxon>
        <taxon>Pseudomonadota</taxon>
        <taxon>Alphaproteobacteria</taxon>
        <taxon>Rickettsiales</taxon>
        <taxon>Rickettsiaceae</taxon>
        <taxon>Rickettsieae</taxon>
        <taxon>Rickettsia</taxon>
        <taxon>spotted fever group</taxon>
    </lineage>
</organism>
<comment type="function">
    <text evidence="1">Catalyzes the GTP-dependent ribosomal translocation step during translation elongation. During this step, the ribosome changes from the pre-translocational (PRE) to the post-translocational (POST) state as the newly formed A-site-bound peptidyl-tRNA and P-site-bound deacylated tRNA move to the P and E sites, respectively. Catalyzes the coordinated movement of the two tRNA molecules, the mRNA and conformational changes in the ribosome.</text>
</comment>
<comment type="subcellular location">
    <subcellularLocation>
        <location evidence="1">Cytoplasm</location>
    </subcellularLocation>
</comment>
<comment type="similarity">
    <text evidence="1">Belongs to the TRAFAC class translation factor GTPase superfamily. Classic translation factor GTPase family. EF-G/EF-2 subfamily.</text>
</comment>
<comment type="sequence caution" evidence="2">
    <conflict type="erroneous initiation">
        <sequence resource="EMBL-CDS" id="AAY62004"/>
    </conflict>
</comment>
<dbReference type="EMBL" id="AF502178">
    <property type="protein sequence ID" value="AAM90929.1"/>
    <property type="molecule type" value="Genomic_DNA"/>
</dbReference>
<dbReference type="EMBL" id="CP000053">
    <property type="protein sequence ID" value="AAY62004.1"/>
    <property type="status" value="ALT_INIT"/>
    <property type="molecule type" value="Genomic_DNA"/>
</dbReference>
<dbReference type="SMR" id="Q8KTA8"/>
<dbReference type="STRING" id="315456.RF_1153"/>
<dbReference type="KEGG" id="rfe:RF_1153"/>
<dbReference type="eggNOG" id="COG0480">
    <property type="taxonomic scope" value="Bacteria"/>
</dbReference>
<dbReference type="HOGENOM" id="CLU_002794_4_1_5"/>
<dbReference type="OrthoDB" id="9802948at2"/>
<dbReference type="Proteomes" id="UP000008548">
    <property type="component" value="Chromosome"/>
</dbReference>
<dbReference type="GO" id="GO:0005737">
    <property type="term" value="C:cytoplasm"/>
    <property type="evidence" value="ECO:0007669"/>
    <property type="project" value="UniProtKB-SubCell"/>
</dbReference>
<dbReference type="GO" id="GO:0005525">
    <property type="term" value="F:GTP binding"/>
    <property type="evidence" value="ECO:0007669"/>
    <property type="project" value="UniProtKB-UniRule"/>
</dbReference>
<dbReference type="GO" id="GO:0003924">
    <property type="term" value="F:GTPase activity"/>
    <property type="evidence" value="ECO:0007669"/>
    <property type="project" value="InterPro"/>
</dbReference>
<dbReference type="GO" id="GO:0003746">
    <property type="term" value="F:translation elongation factor activity"/>
    <property type="evidence" value="ECO:0007669"/>
    <property type="project" value="UniProtKB-UniRule"/>
</dbReference>
<dbReference type="GO" id="GO:0032790">
    <property type="term" value="P:ribosome disassembly"/>
    <property type="evidence" value="ECO:0007669"/>
    <property type="project" value="TreeGrafter"/>
</dbReference>
<dbReference type="CDD" id="cd01886">
    <property type="entry name" value="EF-G"/>
    <property type="match status" value="1"/>
</dbReference>
<dbReference type="CDD" id="cd16262">
    <property type="entry name" value="EFG_III"/>
    <property type="match status" value="1"/>
</dbReference>
<dbReference type="CDD" id="cd01434">
    <property type="entry name" value="EFG_mtEFG1_IV"/>
    <property type="match status" value="1"/>
</dbReference>
<dbReference type="CDD" id="cd03713">
    <property type="entry name" value="EFG_mtEFG_C"/>
    <property type="match status" value="1"/>
</dbReference>
<dbReference type="CDD" id="cd04088">
    <property type="entry name" value="EFG_mtEFG_II"/>
    <property type="match status" value="1"/>
</dbReference>
<dbReference type="FunFam" id="2.40.30.10:FF:000006">
    <property type="entry name" value="Elongation factor G"/>
    <property type="match status" value="1"/>
</dbReference>
<dbReference type="FunFam" id="3.30.230.10:FF:000003">
    <property type="entry name" value="Elongation factor G"/>
    <property type="match status" value="1"/>
</dbReference>
<dbReference type="FunFam" id="3.30.70.240:FF:000001">
    <property type="entry name" value="Elongation factor G"/>
    <property type="match status" value="1"/>
</dbReference>
<dbReference type="FunFam" id="3.30.70.870:FF:000001">
    <property type="entry name" value="Elongation factor G"/>
    <property type="match status" value="1"/>
</dbReference>
<dbReference type="FunFam" id="3.40.50.300:FF:000029">
    <property type="entry name" value="Elongation factor G"/>
    <property type="match status" value="1"/>
</dbReference>
<dbReference type="Gene3D" id="3.30.230.10">
    <property type="match status" value="1"/>
</dbReference>
<dbReference type="Gene3D" id="3.30.70.240">
    <property type="match status" value="1"/>
</dbReference>
<dbReference type="Gene3D" id="3.30.70.870">
    <property type="entry name" value="Elongation Factor G (Translational Gtpase), domain 3"/>
    <property type="match status" value="1"/>
</dbReference>
<dbReference type="Gene3D" id="3.40.50.300">
    <property type="entry name" value="P-loop containing nucleotide triphosphate hydrolases"/>
    <property type="match status" value="1"/>
</dbReference>
<dbReference type="Gene3D" id="2.40.30.10">
    <property type="entry name" value="Translation factors"/>
    <property type="match status" value="1"/>
</dbReference>
<dbReference type="HAMAP" id="MF_00054_B">
    <property type="entry name" value="EF_G_EF_2_B"/>
    <property type="match status" value="1"/>
</dbReference>
<dbReference type="InterPro" id="IPR053905">
    <property type="entry name" value="EF-G-like_DII"/>
</dbReference>
<dbReference type="InterPro" id="IPR041095">
    <property type="entry name" value="EFG_II"/>
</dbReference>
<dbReference type="InterPro" id="IPR009022">
    <property type="entry name" value="EFG_III"/>
</dbReference>
<dbReference type="InterPro" id="IPR035647">
    <property type="entry name" value="EFG_III/V"/>
</dbReference>
<dbReference type="InterPro" id="IPR047872">
    <property type="entry name" value="EFG_IV"/>
</dbReference>
<dbReference type="InterPro" id="IPR035649">
    <property type="entry name" value="EFG_V"/>
</dbReference>
<dbReference type="InterPro" id="IPR000640">
    <property type="entry name" value="EFG_V-like"/>
</dbReference>
<dbReference type="InterPro" id="IPR031157">
    <property type="entry name" value="G_TR_CS"/>
</dbReference>
<dbReference type="InterPro" id="IPR027417">
    <property type="entry name" value="P-loop_NTPase"/>
</dbReference>
<dbReference type="InterPro" id="IPR020568">
    <property type="entry name" value="Ribosomal_Su5_D2-typ_SF"/>
</dbReference>
<dbReference type="InterPro" id="IPR014721">
    <property type="entry name" value="Ribsml_uS5_D2-typ_fold_subgr"/>
</dbReference>
<dbReference type="InterPro" id="IPR005225">
    <property type="entry name" value="Small_GTP-bd"/>
</dbReference>
<dbReference type="InterPro" id="IPR000795">
    <property type="entry name" value="T_Tr_GTP-bd_dom"/>
</dbReference>
<dbReference type="InterPro" id="IPR009000">
    <property type="entry name" value="Transl_B-barrel_sf"/>
</dbReference>
<dbReference type="InterPro" id="IPR004540">
    <property type="entry name" value="Transl_elong_EFG/EF2"/>
</dbReference>
<dbReference type="InterPro" id="IPR005517">
    <property type="entry name" value="Transl_elong_EFG/EF2_IV"/>
</dbReference>
<dbReference type="NCBIfam" id="TIGR00484">
    <property type="entry name" value="EF-G"/>
    <property type="match status" value="1"/>
</dbReference>
<dbReference type="NCBIfam" id="NF009381">
    <property type="entry name" value="PRK12740.1-5"/>
    <property type="match status" value="1"/>
</dbReference>
<dbReference type="NCBIfam" id="TIGR00231">
    <property type="entry name" value="small_GTP"/>
    <property type="match status" value="1"/>
</dbReference>
<dbReference type="PANTHER" id="PTHR43261:SF1">
    <property type="entry name" value="RIBOSOME-RELEASING FACTOR 2, MITOCHONDRIAL"/>
    <property type="match status" value="1"/>
</dbReference>
<dbReference type="PANTHER" id="PTHR43261">
    <property type="entry name" value="TRANSLATION ELONGATION FACTOR G-RELATED"/>
    <property type="match status" value="1"/>
</dbReference>
<dbReference type="Pfam" id="PF22042">
    <property type="entry name" value="EF-G_D2"/>
    <property type="match status" value="1"/>
</dbReference>
<dbReference type="Pfam" id="PF00679">
    <property type="entry name" value="EFG_C"/>
    <property type="match status" value="1"/>
</dbReference>
<dbReference type="Pfam" id="PF14492">
    <property type="entry name" value="EFG_III"/>
    <property type="match status" value="1"/>
</dbReference>
<dbReference type="Pfam" id="PF03764">
    <property type="entry name" value="EFG_IV"/>
    <property type="match status" value="1"/>
</dbReference>
<dbReference type="Pfam" id="PF00009">
    <property type="entry name" value="GTP_EFTU"/>
    <property type="match status" value="1"/>
</dbReference>
<dbReference type="PRINTS" id="PR00315">
    <property type="entry name" value="ELONGATNFCT"/>
</dbReference>
<dbReference type="SMART" id="SM00838">
    <property type="entry name" value="EFG_C"/>
    <property type="match status" value="1"/>
</dbReference>
<dbReference type="SMART" id="SM00889">
    <property type="entry name" value="EFG_IV"/>
    <property type="match status" value="1"/>
</dbReference>
<dbReference type="SUPFAM" id="SSF54980">
    <property type="entry name" value="EF-G C-terminal domain-like"/>
    <property type="match status" value="2"/>
</dbReference>
<dbReference type="SUPFAM" id="SSF52540">
    <property type="entry name" value="P-loop containing nucleoside triphosphate hydrolases"/>
    <property type="match status" value="1"/>
</dbReference>
<dbReference type="SUPFAM" id="SSF54211">
    <property type="entry name" value="Ribosomal protein S5 domain 2-like"/>
    <property type="match status" value="1"/>
</dbReference>
<dbReference type="SUPFAM" id="SSF50447">
    <property type="entry name" value="Translation proteins"/>
    <property type="match status" value="1"/>
</dbReference>
<dbReference type="PROSITE" id="PS00301">
    <property type="entry name" value="G_TR_1"/>
    <property type="match status" value="1"/>
</dbReference>
<dbReference type="PROSITE" id="PS51722">
    <property type="entry name" value="G_TR_2"/>
    <property type="match status" value="1"/>
</dbReference>
<proteinExistence type="inferred from homology"/>